<feature type="chain" id="PRO_1000145920" description="DNA protection during starvation protein">
    <location>
        <begin position="1"/>
        <end position="167"/>
    </location>
</feature>
<feature type="binding site" evidence="1">
    <location>
        <position position="51"/>
    </location>
    <ligand>
        <name>Fe cation</name>
        <dbReference type="ChEBI" id="CHEBI:24875"/>
    </ligand>
</feature>
<feature type="binding site" evidence="1">
    <location>
        <position position="78"/>
    </location>
    <ligand>
        <name>Fe cation</name>
        <dbReference type="ChEBI" id="CHEBI:24875"/>
    </ligand>
</feature>
<feature type="binding site" evidence="1">
    <location>
        <position position="82"/>
    </location>
    <ligand>
        <name>Fe cation</name>
        <dbReference type="ChEBI" id="CHEBI:24875"/>
    </ligand>
</feature>
<comment type="function">
    <text evidence="1">During stationary phase, binds the chromosome non-specifically, forming a highly ordered and stable dps-DNA co-crystal within which chromosomal DNA is condensed and protected from diverse damages. It protects DNA from oxidative damage by sequestering intracellular Fe(2+) ion and storing it in the form of Fe(3+) oxyhydroxide mineral, which can be released after reduction. One hydrogen peroxide oxidizes two Fe(2+) ions, which prevents hydroxyl radical production by the Fenton reaction.</text>
</comment>
<comment type="catalytic activity">
    <reaction evidence="1">
        <text>2 Fe(2+) + H2O2 + 2 H(+) = 2 Fe(3+) + 2 H2O</text>
        <dbReference type="Rhea" id="RHEA:48712"/>
        <dbReference type="ChEBI" id="CHEBI:15377"/>
        <dbReference type="ChEBI" id="CHEBI:15378"/>
        <dbReference type="ChEBI" id="CHEBI:16240"/>
        <dbReference type="ChEBI" id="CHEBI:29033"/>
        <dbReference type="ChEBI" id="CHEBI:29034"/>
    </reaction>
</comment>
<comment type="subunit">
    <text evidence="1">Homododecamer. The 12 subunits form a hollow sphere into which the mineral iron core of up to 500 Fe(3+) can be deposited.</text>
</comment>
<comment type="subcellular location">
    <subcellularLocation>
        <location evidence="1">Cytoplasm</location>
    </subcellularLocation>
</comment>
<comment type="similarity">
    <text evidence="1">Belongs to the Dps family.</text>
</comment>
<name>DPS_YERPY</name>
<organism>
    <name type="scientific">Yersinia pseudotuberculosis serotype O:3 (strain YPIII)</name>
    <dbReference type="NCBI Taxonomy" id="502800"/>
    <lineage>
        <taxon>Bacteria</taxon>
        <taxon>Pseudomonadati</taxon>
        <taxon>Pseudomonadota</taxon>
        <taxon>Gammaproteobacteria</taxon>
        <taxon>Enterobacterales</taxon>
        <taxon>Yersiniaceae</taxon>
        <taxon>Yersinia</taxon>
    </lineage>
</organism>
<accession>B1JHA1</accession>
<gene>
    <name evidence="1" type="primary">dps</name>
    <name type="ordered locus">YPK_1602</name>
</gene>
<sequence length="167" mass="18871">MSTAKLVKTKPSELLYTRNDVEEHVKVATIKRLNQMVIQFIDLSLITKQAHWNMRGANFVAVHEMLDGFRTALTDHLDTFAERAVQLGGVALGTAQVINDKTPLKSYPTNIHSVQEHLKALAERYAIVANDIRKAITEVEDENSADMFTAASRDLDKFLWFIESNIE</sequence>
<evidence type="ECO:0000255" key="1">
    <source>
        <dbReference type="HAMAP-Rule" id="MF_01441"/>
    </source>
</evidence>
<protein>
    <recommendedName>
        <fullName evidence="1">DNA protection during starvation protein</fullName>
        <ecNumber evidence="1">1.16.-.-</ecNumber>
    </recommendedName>
</protein>
<dbReference type="EC" id="1.16.-.-" evidence="1"/>
<dbReference type="EMBL" id="CP000950">
    <property type="protein sequence ID" value="ACA67895.1"/>
    <property type="molecule type" value="Genomic_DNA"/>
</dbReference>
<dbReference type="RefSeq" id="WP_002210233.1">
    <property type="nucleotide sequence ID" value="NZ_CP009792.1"/>
</dbReference>
<dbReference type="SMR" id="B1JHA1"/>
<dbReference type="GeneID" id="57976175"/>
<dbReference type="KEGG" id="ypy:YPK_1602"/>
<dbReference type="PATRIC" id="fig|502800.11.peg.2253"/>
<dbReference type="GO" id="GO:0005737">
    <property type="term" value="C:cytoplasm"/>
    <property type="evidence" value="ECO:0007669"/>
    <property type="project" value="UniProtKB-SubCell"/>
</dbReference>
<dbReference type="GO" id="GO:0003677">
    <property type="term" value="F:DNA binding"/>
    <property type="evidence" value="ECO:0007669"/>
    <property type="project" value="UniProtKB-UniRule"/>
</dbReference>
<dbReference type="GO" id="GO:0008199">
    <property type="term" value="F:ferric iron binding"/>
    <property type="evidence" value="ECO:0007669"/>
    <property type="project" value="UniProtKB-UniRule"/>
</dbReference>
<dbReference type="GO" id="GO:0016722">
    <property type="term" value="F:oxidoreductase activity, acting on metal ions"/>
    <property type="evidence" value="ECO:0007669"/>
    <property type="project" value="InterPro"/>
</dbReference>
<dbReference type="GO" id="GO:0030261">
    <property type="term" value="P:chromosome condensation"/>
    <property type="evidence" value="ECO:0007669"/>
    <property type="project" value="UniProtKB-KW"/>
</dbReference>
<dbReference type="GO" id="GO:0006879">
    <property type="term" value="P:intracellular iron ion homeostasis"/>
    <property type="evidence" value="ECO:0007669"/>
    <property type="project" value="UniProtKB-KW"/>
</dbReference>
<dbReference type="CDD" id="cd01043">
    <property type="entry name" value="DPS"/>
    <property type="match status" value="1"/>
</dbReference>
<dbReference type="Gene3D" id="1.20.1260.10">
    <property type="match status" value="1"/>
</dbReference>
<dbReference type="HAMAP" id="MF_01441">
    <property type="entry name" value="Dps"/>
    <property type="match status" value="1"/>
</dbReference>
<dbReference type="InterPro" id="IPR002177">
    <property type="entry name" value="DPS_DNA-bd"/>
</dbReference>
<dbReference type="InterPro" id="IPR023188">
    <property type="entry name" value="DPS_DNA-bd_CS"/>
</dbReference>
<dbReference type="InterPro" id="IPR023067">
    <property type="entry name" value="Dps_gammaproteobac"/>
</dbReference>
<dbReference type="InterPro" id="IPR012347">
    <property type="entry name" value="Ferritin-like"/>
</dbReference>
<dbReference type="InterPro" id="IPR009078">
    <property type="entry name" value="Ferritin-like_SF"/>
</dbReference>
<dbReference type="InterPro" id="IPR008331">
    <property type="entry name" value="Ferritin_DPS_dom"/>
</dbReference>
<dbReference type="NCBIfam" id="NF006975">
    <property type="entry name" value="PRK09448.1"/>
    <property type="match status" value="1"/>
</dbReference>
<dbReference type="PANTHER" id="PTHR42932:SF3">
    <property type="entry name" value="DNA PROTECTION DURING STARVATION PROTEIN"/>
    <property type="match status" value="1"/>
</dbReference>
<dbReference type="PANTHER" id="PTHR42932">
    <property type="entry name" value="GENERAL STRESS PROTEIN 20U"/>
    <property type="match status" value="1"/>
</dbReference>
<dbReference type="Pfam" id="PF00210">
    <property type="entry name" value="Ferritin"/>
    <property type="match status" value="1"/>
</dbReference>
<dbReference type="PIRSF" id="PIRSF005900">
    <property type="entry name" value="Dps"/>
    <property type="match status" value="1"/>
</dbReference>
<dbReference type="PRINTS" id="PR01346">
    <property type="entry name" value="HELNAPAPROT"/>
</dbReference>
<dbReference type="SUPFAM" id="SSF47240">
    <property type="entry name" value="Ferritin-like"/>
    <property type="match status" value="1"/>
</dbReference>
<dbReference type="PROSITE" id="PS00818">
    <property type="entry name" value="DPS_1"/>
    <property type="match status" value="1"/>
</dbReference>
<proteinExistence type="inferred from homology"/>
<keyword id="KW-0963">Cytoplasm</keyword>
<keyword id="KW-0226">DNA condensation</keyword>
<keyword id="KW-0238">DNA-binding</keyword>
<keyword id="KW-0408">Iron</keyword>
<keyword id="KW-0409">Iron storage</keyword>
<keyword id="KW-0479">Metal-binding</keyword>
<keyword id="KW-0560">Oxidoreductase</keyword>
<reference key="1">
    <citation type="submission" date="2008-02" db="EMBL/GenBank/DDBJ databases">
        <title>Complete sequence of Yersinia pseudotuberculosis YPIII.</title>
        <authorList>
            <consortium name="US DOE Joint Genome Institute"/>
            <person name="Copeland A."/>
            <person name="Lucas S."/>
            <person name="Lapidus A."/>
            <person name="Glavina del Rio T."/>
            <person name="Dalin E."/>
            <person name="Tice H."/>
            <person name="Bruce D."/>
            <person name="Goodwin L."/>
            <person name="Pitluck S."/>
            <person name="Munk A.C."/>
            <person name="Brettin T."/>
            <person name="Detter J.C."/>
            <person name="Han C."/>
            <person name="Tapia R."/>
            <person name="Schmutz J."/>
            <person name="Larimer F."/>
            <person name="Land M."/>
            <person name="Hauser L."/>
            <person name="Challacombe J.F."/>
            <person name="Green L."/>
            <person name="Lindler L.E."/>
            <person name="Nikolich M.P."/>
            <person name="Richardson P."/>
        </authorList>
    </citation>
    <scope>NUCLEOTIDE SEQUENCE [LARGE SCALE GENOMIC DNA]</scope>
    <source>
        <strain>YPIII</strain>
    </source>
</reference>